<sequence length="296" mass="33981">MRKIKLIAVVGPTAVGKTALGIELAKTFNGEIISGDSQQVYQKLDIGTAKASKEEQEQAYHHLIDVREVNENYSVYDFVKEAKVAIDTIISKGKIPIIVGGTGLYLQSLFEGYHLGGEVNQETLMAYREKLESLSDEDLFEKLTEQSIVIPQVNRRRAIRALELAKFGNDLQNSESPYDVLLIGLNDDRQVLYDRINRRVDLMIDNGLLDEAKWLYDNYPSVQASRGIGYKELFPYFSKQIPLEEAVDKLKQNTRRFAKRQLTWFRNRMNVEFIMVGEENYQQKIKRKVSDFLSSK</sequence>
<comment type="function">
    <text evidence="1">Catalyzes the transfer of a dimethylallyl group onto the adenine at position 37 in tRNAs that read codons beginning with uridine, leading to the formation of N6-(dimethylallyl)adenosine (i(6)A).</text>
</comment>
<comment type="catalytic activity">
    <reaction evidence="1">
        <text>adenosine(37) in tRNA + dimethylallyl diphosphate = N(6)-dimethylallyladenosine(37) in tRNA + diphosphate</text>
        <dbReference type="Rhea" id="RHEA:26482"/>
        <dbReference type="Rhea" id="RHEA-COMP:10162"/>
        <dbReference type="Rhea" id="RHEA-COMP:10375"/>
        <dbReference type="ChEBI" id="CHEBI:33019"/>
        <dbReference type="ChEBI" id="CHEBI:57623"/>
        <dbReference type="ChEBI" id="CHEBI:74411"/>
        <dbReference type="ChEBI" id="CHEBI:74415"/>
        <dbReference type="EC" id="2.5.1.75"/>
    </reaction>
</comment>
<comment type="cofactor">
    <cofactor evidence="1">
        <name>Mg(2+)</name>
        <dbReference type="ChEBI" id="CHEBI:18420"/>
    </cofactor>
</comment>
<comment type="subunit">
    <text evidence="1">Monomer.</text>
</comment>
<comment type="similarity">
    <text evidence="1">Belongs to the IPP transferase family.</text>
</comment>
<dbReference type="EC" id="2.5.1.75" evidence="1"/>
<dbReference type="EMBL" id="CP000114">
    <property type="protein sequence ID" value="ABA45233.1"/>
    <property type="molecule type" value="Genomic_DNA"/>
</dbReference>
<dbReference type="RefSeq" id="WP_001226485.1">
    <property type="nucleotide sequence ID" value="NC_007432.1"/>
</dbReference>
<dbReference type="SMR" id="Q3K0P1"/>
<dbReference type="KEGG" id="sak:SAK_1299"/>
<dbReference type="HOGENOM" id="CLU_032616_0_1_9"/>
<dbReference type="GO" id="GO:0005524">
    <property type="term" value="F:ATP binding"/>
    <property type="evidence" value="ECO:0007669"/>
    <property type="project" value="UniProtKB-UniRule"/>
</dbReference>
<dbReference type="GO" id="GO:0052381">
    <property type="term" value="F:tRNA dimethylallyltransferase activity"/>
    <property type="evidence" value="ECO:0007669"/>
    <property type="project" value="UniProtKB-UniRule"/>
</dbReference>
<dbReference type="GO" id="GO:0006400">
    <property type="term" value="P:tRNA modification"/>
    <property type="evidence" value="ECO:0007669"/>
    <property type="project" value="TreeGrafter"/>
</dbReference>
<dbReference type="Gene3D" id="3.40.50.300">
    <property type="entry name" value="P-loop containing nucleotide triphosphate hydrolases"/>
    <property type="match status" value="1"/>
</dbReference>
<dbReference type="HAMAP" id="MF_00185">
    <property type="entry name" value="IPP_trans"/>
    <property type="match status" value="1"/>
</dbReference>
<dbReference type="InterPro" id="IPR039657">
    <property type="entry name" value="Dimethylallyltransferase"/>
</dbReference>
<dbReference type="InterPro" id="IPR018022">
    <property type="entry name" value="IPT"/>
</dbReference>
<dbReference type="InterPro" id="IPR027417">
    <property type="entry name" value="P-loop_NTPase"/>
</dbReference>
<dbReference type="NCBIfam" id="TIGR00174">
    <property type="entry name" value="miaA"/>
    <property type="match status" value="1"/>
</dbReference>
<dbReference type="PANTHER" id="PTHR11088">
    <property type="entry name" value="TRNA DIMETHYLALLYLTRANSFERASE"/>
    <property type="match status" value="1"/>
</dbReference>
<dbReference type="PANTHER" id="PTHR11088:SF60">
    <property type="entry name" value="TRNA DIMETHYLALLYLTRANSFERASE"/>
    <property type="match status" value="1"/>
</dbReference>
<dbReference type="Pfam" id="PF01715">
    <property type="entry name" value="IPPT"/>
    <property type="match status" value="1"/>
</dbReference>
<dbReference type="SUPFAM" id="SSF52540">
    <property type="entry name" value="P-loop containing nucleoside triphosphate hydrolases"/>
    <property type="match status" value="1"/>
</dbReference>
<reference key="1">
    <citation type="journal article" date="2005" name="Proc. Natl. Acad. Sci. U.S.A.">
        <title>Genome analysis of multiple pathogenic isolates of Streptococcus agalactiae: implications for the microbial 'pan-genome'.</title>
        <authorList>
            <person name="Tettelin H."/>
            <person name="Masignani V."/>
            <person name="Cieslewicz M.J."/>
            <person name="Donati C."/>
            <person name="Medini D."/>
            <person name="Ward N.L."/>
            <person name="Angiuoli S.V."/>
            <person name="Crabtree J."/>
            <person name="Jones A.L."/>
            <person name="Durkin A.S."/>
            <person name="DeBoy R.T."/>
            <person name="Davidsen T.M."/>
            <person name="Mora M."/>
            <person name="Scarselli M."/>
            <person name="Margarit y Ros I."/>
            <person name="Peterson J.D."/>
            <person name="Hauser C.R."/>
            <person name="Sundaram J.P."/>
            <person name="Nelson W.C."/>
            <person name="Madupu R."/>
            <person name="Brinkac L.M."/>
            <person name="Dodson R.J."/>
            <person name="Rosovitz M.J."/>
            <person name="Sullivan S.A."/>
            <person name="Daugherty S.C."/>
            <person name="Haft D.H."/>
            <person name="Selengut J."/>
            <person name="Gwinn M.L."/>
            <person name="Zhou L."/>
            <person name="Zafar N."/>
            <person name="Khouri H."/>
            <person name="Radune D."/>
            <person name="Dimitrov G."/>
            <person name="Watkins K."/>
            <person name="O'Connor K.J."/>
            <person name="Smith S."/>
            <person name="Utterback T.R."/>
            <person name="White O."/>
            <person name="Rubens C.E."/>
            <person name="Grandi G."/>
            <person name="Madoff L.C."/>
            <person name="Kasper D.L."/>
            <person name="Telford J.L."/>
            <person name="Wessels M.R."/>
            <person name="Rappuoli R."/>
            <person name="Fraser C.M."/>
        </authorList>
    </citation>
    <scope>NUCLEOTIDE SEQUENCE [LARGE SCALE GENOMIC DNA]</scope>
    <source>
        <strain>ATCC 27591 / A909 / CDC SS700</strain>
    </source>
</reference>
<organism>
    <name type="scientific">Streptococcus agalactiae serotype Ia (strain ATCC 27591 / A909 / CDC SS700)</name>
    <dbReference type="NCBI Taxonomy" id="205921"/>
    <lineage>
        <taxon>Bacteria</taxon>
        <taxon>Bacillati</taxon>
        <taxon>Bacillota</taxon>
        <taxon>Bacilli</taxon>
        <taxon>Lactobacillales</taxon>
        <taxon>Streptococcaceae</taxon>
        <taxon>Streptococcus</taxon>
    </lineage>
</organism>
<proteinExistence type="inferred from homology"/>
<keyword id="KW-0067">ATP-binding</keyword>
<keyword id="KW-0460">Magnesium</keyword>
<keyword id="KW-0547">Nucleotide-binding</keyword>
<keyword id="KW-0808">Transferase</keyword>
<keyword id="KW-0819">tRNA processing</keyword>
<evidence type="ECO:0000255" key="1">
    <source>
        <dbReference type="HAMAP-Rule" id="MF_00185"/>
    </source>
</evidence>
<gene>
    <name evidence="1" type="primary">miaA</name>
    <name type="ordered locus">SAK_1299</name>
</gene>
<name>MIAA_STRA1</name>
<feature type="chain" id="PRO_1000020666" description="tRNA dimethylallyltransferase">
    <location>
        <begin position="1"/>
        <end position="296"/>
    </location>
</feature>
<feature type="region of interest" description="Interaction with substrate tRNA" evidence="1">
    <location>
        <begin position="36"/>
        <end position="39"/>
    </location>
</feature>
<feature type="binding site" evidence="1">
    <location>
        <begin position="11"/>
        <end position="18"/>
    </location>
    <ligand>
        <name>ATP</name>
        <dbReference type="ChEBI" id="CHEBI:30616"/>
    </ligand>
</feature>
<feature type="binding site" evidence="1">
    <location>
        <begin position="13"/>
        <end position="18"/>
    </location>
    <ligand>
        <name>substrate</name>
    </ligand>
</feature>
<feature type="site" description="Interaction with substrate tRNA" evidence="1">
    <location>
        <position position="102"/>
    </location>
</feature>
<feature type="site" description="Interaction with substrate tRNA" evidence="1">
    <location>
        <position position="128"/>
    </location>
</feature>
<protein>
    <recommendedName>
        <fullName evidence="1">tRNA dimethylallyltransferase</fullName>
        <ecNumber evidence="1">2.5.1.75</ecNumber>
    </recommendedName>
    <alternativeName>
        <fullName evidence="1">Dimethylallyl diphosphate:tRNA dimethylallyltransferase</fullName>
        <shortName evidence="1">DMAPP:tRNA dimethylallyltransferase</shortName>
        <shortName evidence="1">DMATase</shortName>
    </alternativeName>
    <alternativeName>
        <fullName evidence="1">Isopentenyl-diphosphate:tRNA isopentenyltransferase</fullName>
        <shortName evidence="1">IPP transferase</shortName>
        <shortName evidence="1">IPPT</shortName>
        <shortName evidence="1">IPTase</shortName>
    </alternativeName>
</protein>
<accession>Q3K0P1</accession>